<name>GLGB_CUPPJ</name>
<organism>
    <name type="scientific">Cupriavidus pinatubonensis (strain JMP 134 / LMG 1197)</name>
    <name type="common">Cupriavidus necator (strain JMP 134)</name>
    <dbReference type="NCBI Taxonomy" id="264198"/>
    <lineage>
        <taxon>Bacteria</taxon>
        <taxon>Pseudomonadati</taxon>
        <taxon>Pseudomonadota</taxon>
        <taxon>Betaproteobacteria</taxon>
        <taxon>Burkholderiales</taxon>
        <taxon>Burkholderiaceae</taxon>
        <taxon>Cupriavidus</taxon>
    </lineage>
</organism>
<comment type="function">
    <text evidence="1">Catalyzes the formation of the alpha-1,6-glucosidic linkages in glycogen by scission of a 1,4-alpha-linked oligosaccharide from growing alpha-1,4-glucan chains and the subsequent attachment of the oligosaccharide to the alpha-1,6 position.</text>
</comment>
<comment type="catalytic activity">
    <reaction evidence="1">
        <text>Transfers a segment of a (1-&gt;4)-alpha-D-glucan chain to a primary hydroxy group in a similar glucan chain.</text>
        <dbReference type="EC" id="2.4.1.18"/>
    </reaction>
</comment>
<comment type="pathway">
    <text evidence="1">Glycan biosynthesis; glycogen biosynthesis.</text>
</comment>
<comment type="subunit">
    <text evidence="1">Monomer.</text>
</comment>
<comment type="similarity">
    <text evidence="1">Belongs to the glycosyl hydrolase 13 family. GlgB subfamily.</text>
</comment>
<accession>Q46TF2</accession>
<evidence type="ECO:0000255" key="1">
    <source>
        <dbReference type="HAMAP-Rule" id="MF_00685"/>
    </source>
</evidence>
<dbReference type="EC" id="2.4.1.18" evidence="1"/>
<dbReference type="EMBL" id="CP000091">
    <property type="protein sequence ID" value="AAZ63582.1"/>
    <property type="molecule type" value="Genomic_DNA"/>
</dbReference>
<dbReference type="SMR" id="Q46TF2"/>
<dbReference type="STRING" id="264198.Reut_B4229"/>
<dbReference type="CAZy" id="CBM48">
    <property type="family name" value="Carbohydrate-Binding Module Family 48"/>
</dbReference>
<dbReference type="CAZy" id="GH13">
    <property type="family name" value="Glycoside Hydrolase Family 13"/>
</dbReference>
<dbReference type="KEGG" id="reu:Reut_B4229"/>
<dbReference type="eggNOG" id="COG0296">
    <property type="taxonomic scope" value="Bacteria"/>
</dbReference>
<dbReference type="HOGENOM" id="CLU_004245_3_2_4"/>
<dbReference type="OrthoDB" id="9800174at2"/>
<dbReference type="UniPathway" id="UPA00164"/>
<dbReference type="GO" id="GO:0005829">
    <property type="term" value="C:cytosol"/>
    <property type="evidence" value="ECO:0007669"/>
    <property type="project" value="TreeGrafter"/>
</dbReference>
<dbReference type="GO" id="GO:0003844">
    <property type="term" value="F:1,4-alpha-glucan branching enzyme activity"/>
    <property type="evidence" value="ECO:0007669"/>
    <property type="project" value="UniProtKB-UniRule"/>
</dbReference>
<dbReference type="GO" id="GO:0043169">
    <property type="term" value="F:cation binding"/>
    <property type="evidence" value="ECO:0007669"/>
    <property type="project" value="InterPro"/>
</dbReference>
<dbReference type="GO" id="GO:0004553">
    <property type="term" value="F:hydrolase activity, hydrolyzing O-glycosyl compounds"/>
    <property type="evidence" value="ECO:0007669"/>
    <property type="project" value="InterPro"/>
</dbReference>
<dbReference type="GO" id="GO:0005978">
    <property type="term" value="P:glycogen biosynthetic process"/>
    <property type="evidence" value="ECO:0007669"/>
    <property type="project" value="UniProtKB-UniRule"/>
</dbReference>
<dbReference type="CDD" id="cd11322">
    <property type="entry name" value="AmyAc_Glg_BE"/>
    <property type="match status" value="1"/>
</dbReference>
<dbReference type="CDD" id="cd02855">
    <property type="entry name" value="E_set_GBE_prok_N"/>
    <property type="match status" value="1"/>
</dbReference>
<dbReference type="FunFam" id="2.60.40.10:FF:000169">
    <property type="entry name" value="1,4-alpha-glucan branching enzyme GlgB"/>
    <property type="match status" value="1"/>
</dbReference>
<dbReference type="FunFam" id="2.60.40.1180:FF:000002">
    <property type="entry name" value="1,4-alpha-glucan branching enzyme GlgB"/>
    <property type="match status" value="1"/>
</dbReference>
<dbReference type="FunFam" id="3.20.20.80:FF:000003">
    <property type="entry name" value="1,4-alpha-glucan branching enzyme GlgB"/>
    <property type="match status" value="1"/>
</dbReference>
<dbReference type="Gene3D" id="3.20.20.80">
    <property type="entry name" value="Glycosidases"/>
    <property type="match status" value="1"/>
</dbReference>
<dbReference type="Gene3D" id="2.60.40.1180">
    <property type="entry name" value="Golgi alpha-mannosidase II"/>
    <property type="match status" value="1"/>
</dbReference>
<dbReference type="Gene3D" id="2.60.40.10">
    <property type="entry name" value="Immunoglobulins"/>
    <property type="match status" value="2"/>
</dbReference>
<dbReference type="HAMAP" id="MF_00685">
    <property type="entry name" value="GlgB"/>
    <property type="match status" value="1"/>
</dbReference>
<dbReference type="InterPro" id="IPR006048">
    <property type="entry name" value="A-amylase/branching_C"/>
</dbReference>
<dbReference type="InterPro" id="IPR037439">
    <property type="entry name" value="Branching_enzy"/>
</dbReference>
<dbReference type="InterPro" id="IPR006407">
    <property type="entry name" value="GlgB"/>
</dbReference>
<dbReference type="InterPro" id="IPR054169">
    <property type="entry name" value="GlgB_N"/>
</dbReference>
<dbReference type="InterPro" id="IPR044143">
    <property type="entry name" value="GlgB_N_E_set_prok"/>
</dbReference>
<dbReference type="InterPro" id="IPR006047">
    <property type="entry name" value="Glyco_hydro_13_cat_dom"/>
</dbReference>
<dbReference type="InterPro" id="IPR004193">
    <property type="entry name" value="Glyco_hydro_13_N"/>
</dbReference>
<dbReference type="InterPro" id="IPR013780">
    <property type="entry name" value="Glyco_hydro_b"/>
</dbReference>
<dbReference type="InterPro" id="IPR017853">
    <property type="entry name" value="Glycoside_hydrolase_SF"/>
</dbReference>
<dbReference type="InterPro" id="IPR013783">
    <property type="entry name" value="Ig-like_fold"/>
</dbReference>
<dbReference type="InterPro" id="IPR014756">
    <property type="entry name" value="Ig_E-set"/>
</dbReference>
<dbReference type="NCBIfam" id="TIGR01515">
    <property type="entry name" value="branching_enzym"/>
    <property type="match status" value="1"/>
</dbReference>
<dbReference type="NCBIfam" id="NF003811">
    <property type="entry name" value="PRK05402.1"/>
    <property type="match status" value="1"/>
</dbReference>
<dbReference type="NCBIfam" id="NF008967">
    <property type="entry name" value="PRK12313.1"/>
    <property type="match status" value="1"/>
</dbReference>
<dbReference type="PANTHER" id="PTHR43651">
    <property type="entry name" value="1,4-ALPHA-GLUCAN-BRANCHING ENZYME"/>
    <property type="match status" value="1"/>
</dbReference>
<dbReference type="PANTHER" id="PTHR43651:SF3">
    <property type="entry name" value="1,4-ALPHA-GLUCAN-BRANCHING ENZYME"/>
    <property type="match status" value="1"/>
</dbReference>
<dbReference type="Pfam" id="PF00128">
    <property type="entry name" value="Alpha-amylase"/>
    <property type="match status" value="1"/>
</dbReference>
<dbReference type="Pfam" id="PF02806">
    <property type="entry name" value="Alpha-amylase_C"/>
    <property type="match status" value="1"/>
</dbReference>
<dbReference type="Pfam" id="PF02922">
    <property type="entry name" value="CBM_48"/>
    <property type="match status" value="1"/>
</dbReference>
<dbReference type="Pfam" id="PF22019">
    <property type="entry name" value="GlgB_N"/>
    <property type="match status" value="1"/>
</dbReference>
<dbReference type="PIRSF" id="PIRSF000463">
    <property type="entry name" value="GlgB"/>
    <property type="match status" value="1"/>
</dbReference>
<dbReference type="SMART" id="SM00642">
    <property type="entry name" value="Aamy"/>
    <property type="match status" value="1"/>
</dbReference>
<dbReference type="SUPFAM" id="SSF51445">
    <property type="entry name" value="(Trans)glycosidases"/>
    <property type="match status" value="1"/>
</dbReference>
<dbReference type="SUPFAM" id="SSF81296">
    <property type="entry name" value="E set domains"/>
    <property type="match status" value="1"/>
</dbReference>
<dbReference type="SUPFAM" id="SSF51011">
    <property type="entry name" value="Glycosyl hydrolase domain"/>
    <property type="match status" value="1"/>
</dbReference>
<gene>
    <name evidence="1" type="primary">glgB</name>
    <name type="ordered locus">Reut_B4229</name>
</gene>
<feature type="chain" id="PRO_0000260681" description="1,4-alpha-glucan branching enzyme GlgB">
    <location>
        <begin position="1"/>
        <end position="750"/>
    </location>
</feature>
<feature type="active site" description="Nucleophile" evidence="1">
    <location>
        <position position="425"/>
    </location>
</feature>
<feature type="active site" description="Proton donor" evidence="1">
    <location>
        <position position="478"/>
    </location>
</feature>
<proteinExistence type="inferred from homology"/>
<sequence>MNRVDTRPPERRTQTISDGELGALVEGRHRDPFAILGPHRDGDTLIVRACVPGAHSVMLADSRGEPLAPMTPLHAGGVFTGRLPAGVSVYQLLVRWHNGTQQVSHDPYAFGLLLGELDLHLIAEGRHFELGACLGAQWRNVDGVQGVRFAVWAPNARRVSVIGDFNGWQPARHPMRLRHPSGVWELFIPEAMGARPGCRYKFDLLDPHDAQLPDKADPLALATEAPPATASVVTQPQVSAPPFAWQDDEWMRLRNAVDPYAAPLSIYEVHVGSWLRAANDPARGWEVLADRLIPYVHELGFTHIELLPVTEHPFGGSWGYQPLSLYAPTARLGPPQAFAAFIDRCHRDGIGVILDWVPAHFPTDPHGLARFDGTALYEHEDPREGFHQDWNTLIYNLGRNEVRGFLLAGALHWLEHFHVDGLRVDAVASMLYRDYSRAPDQWVPNRFGGRENLEAVAFLRELNTVVHERCPGALTIAEESTAWPGVTASAASGGLGFDFKWNMGWMHDTLRYLSLDPIHRAWHHQDMTFGTVYAWSEAFVLPLSHDEVVHGKGSMLRKCPGDDWQRFAGLRAYYGFMWAHPGKKLLFMGGELAQWQEWNHDAELDWALLDHPMHRGVHTLVRDLNALYRELPALHELDHSPAGFQWVVGDDHQNSVFAWLRRPAPGSGDVVLAVTNMTPVPRYGYRIGVPSEGCWHERLNTDAACYGGSNLGNGGAVTAEPVPSHGQEASVLLTLPPLATVILQHAGTQA</sequence>
<keyword id="KW-0119">Carbohydrate metabolism</keyword>
<keyword id="KW-0320">Glycogen biosynthesis</keyword>
<keyword id="KW-0321">Glycogen metabolism</keyword>
<keyword id="KW-0328">Glycosyltransferase</keyword>
<keyword id="KW-0808">Transferase</keyword>
<reference key="1">
    <citation type="journal article" date="2010" name="PLoS ONE">
        <title>The complete multipartite genome sequence of Cupriavidus necator JMP134, a versatile pollutant degrader.</title>
        <authorList>
            <person name="Lykidis A."/>
            <person name="Perez-Pantoja D."/>
            <person name="Ledger T."/>
            <person name="Mavromatis K."/>
            <person name="Anderson I.J."/>
            <person name="Ivanova N.N."/>
            <person name="Hooper S.D."/>
            <person name="Lapidus A."/>
            <person name="Lucas S."/>
            <person name="Gonzalez B."/>
            <person name="Kyrpides N.C."/>
        </authorList>
    </citation>
    <scope>NUCLEOTIDE SEQUENCE [LARGE SCALE GENOMIC DNA]</scope>
    <source>
        <strain>JMP134 / LMG 1197</strain>
    </source>
</reference>
<protein>
    <recommendedName>
        <fullName evidence="1">1,4-alpha-glucan branching enzyme GlgB</fullName>
        <ecNumber evidence="1">2.4.1.18</ecNumber>
    </recommendedName>
    <alternativeName>
        <fullName evidence="1">1,4-alpha-D-glucan:1,4-alpha-D-glucan 6-glucosyl-transferase</fullName>
    </alternativeName>
    <alternativeName>
        <fullName evidence="1">Alpha-(1-&gt;4)-glucan branching enzyme</fullName>
    </alternativeName>
    <alternativeName>
        <fullName evidence="1">Glycogen branching enzyme</fullName>
        <shortName evidence="1">BE</shortName>
    </alternativeName>
</protein>